<dbReference type="EC" id="2.1.3.-" evidence="1"/>
<dbReference type="EMBL" id="CP000672">
    <property type="protein sequence ID" value="ABQ99840.1"/>
    <property type="molecule type" value="Genomic_DNA"/>
</dbReference>
<dbReference type="SMR" id="A5UGD5"/>
<dbReference type="KEGG" id="hiq:CGSHiGG_04410"/>
<dbReference type="HOGENOM" id="CLU_078475_0_0_6"/>
<dbReference type="Proteomes" id="UP000001990">
    <property type="component" value="Chromosome"/>
</dbReference>
<dbReference type="GO" id="GO:0016743">
    <property type="term" value="F:carboxyl- or carbamoyltransferase activity"/>
    <property type="evidence" value="ECO:0007669"/>
    <property type="project" value="UniProtKB-UniRule"/>
</dbReference>
<dbReference type="GO" id="GO:1904047">
    <property type="term" value="F:S-adenosyl-L-methionine binding"/>
    <property type="evidence" value="ECO:0007669"/>
    <property type="project" value="UniProtKB-UniRule"/>
</dbReference>
<dbReference type="GO" id="GO:0002098">
    <property type="term" value="P:tRNA wobble uridine modification"/>
    <property type="evidence" value="ECO:0007669"/>
    <property type="project" value="InterPro"/>
</dbReference>
<dbReference type="CDD" id="cd02440">
    <property type="entry name" value="AdoMet_MTases"/>
    <property type="match status" value="1"/>
</dbReference>
<dbReference type="Gene3D" id="3.40.50.150">
    <property type="entry name" value="Vaccinia Virus protein VP39"/>
    <property type="match status" value="1"/>
</dbReference>
<dbReference type="HAMAP" id="MF_01589">
    <property type="entry name" value="Cx_SAM_synthase"/>
    <property type="match status" value="1"/>
</dbReference>
<dbReference type="InterPro" id="IPR005271">
    <property type="entry name" value="CmoA"/>
</dbReference>
<dbReference type="InterPro" id="IPR041698">
    <property type="entry name" value="Methyltransf_25"/>
</dbReference>
<dbReference type="InterPro" id="IPR029063">
    <property type="entry name" value="SAM-dependent_MTases_sf"/>
</dbReference>
<dbReference type="NCBIfam" id="TIGR00740">
    <property type="entry name" value="carboxy-S-adenosyl-L-methionine synthase CmoA"/>
    <property type="match status" value="1"/>
</dbReference>
<dbReference type="NCBIfam" id="NF011995">
    <property type="entry name" value="PRK15451.1"/>
    <property type="match status" value="1"/>
</dbReference>
<dbReference type="PANTHER" id="PTHR43861:SF2">
    <property type="entry name" value="CARBOXY-S-ADENOSYL-L-METHIONINE SYNTHASE"/>
    <property type="match status" value="1"/>
</dbReference>
<dbReference type="PANTHER" id="PTHR43861">
    <property type="entry name" value="TRANS-ACONITATE 2-METHYLTRANSFERASE-RELATED"/>
    <property type="match status" value="1"/>
</dbReference>
<dbReference type="Pfam" id="PF13649">
    <property type="entry name" value="Methyltransf_25"/>
    <property type="match status" value="1"/>
</dbReference>
<dbReference type="PIRSF" id="PIRSF006325">
    <property type="entry name" value="MeTrfase_bac"/>
    <property type="match status" value="1"/>
</dbReference>
<dbReference type="SUPFAM" id="SSF53335">
    <property type="entry name" value="S-adenosyl-L-methionine-dependent methyltransferases"/>
    <property type="match status" value="1"/>
</dbReference>
<name>CMOA_HAEIG</name>
<feature type="chain" id="PRO_0000314335" description="Carboxy-S-adenosyl-L-methionine synthase">
    <location>
        <begin position="1"/>
        <end position="241"/>
    </location>
</feature>
<feature type="binding site" evidence="1">
    <location>
        <position position="38"/>
    </location>
    <ligand>
        <name>S-adenosyl-L-methionine</name>
        <dbReference type="ChEBI" id="CHEBI:59789"/>
    </ligand>
</feature>
<feature type="binding site" evidence="1">
    <location>
        <begin position="63"/>
        <end position="65"/>
    </location>
    <ligand>
        <name>S-adenosyl-L-methionine</name>
        <dbReference type="ChEBI" id="CHEBI:59789"/>
    </ligand>
</feature>
<feature type="binding site" evidence="1">
    <location>
        <begin position="88"/>
        <end position="89"/>
    </location>
    <ligand>
        <name>S-adenosyl-L-methionine</name>
        <dbReference type="ChEBI" id="CHEBI:59789"/>
    </ligand>
</feature>
<feature type="binding site" evidence="1">
    <location>
        <begin position="116"/>
        <end position="117"/>
    </location>
    <ligand>
        <name>S-adenosyl-L-methionine</name>
        <dbReference type="ChEBI" id="CHEBI:59789"/>
    </ligand>
</feature>
<feature type="binding site" evidence="1">
    <location>
        <position position="131"/>
    </location>
    <ligand>
        <name>S-adenosyl-L-methionine</name>
        <dbReference type="ChEBI" id="CHEBI:59789"/>
    </ligand>
</feature>
<feature type="binding site" evidence="1">
    <location>
        <position position="198"/>
    </location>
    <ligand>
        <name>S-adenosyl-L-methionine</name>
        <dbReference type="ChEBI" id="CHEBI:59789"/>
    </ligand>
</feature>
<organism>
    <name type="scientific">Haemophilus influenzae (strain PittGG)</name>
    <dbReference type="NCBI Taxonomy" id="374931"/>
    <lineage>
        <taxon>Bacteria</taxon>
        <taxon>Pseudomonadati</taxon>
        <taxon>Pseudomonadota</taxon>
        <taxon>Gammaproteobacteria</taxon>
        <taxon>Pasteurellales</taxon>
        <taxon>Pasteurellaceae</taxon>
        <taxon>Haemophilus</taxon>
    </lineage>
</organism>
<evidence type="ECO:0000255" key="1">
    <source>
        <dbReference type="HAMAP-Rule" id="MF_01589"/>
    </source>
</evidence>
<reference key="1">
    <citation type="journal article" date="2007" name="Genome Biol.">
        <title>Characterization and modeling of the Haemophilus influenzae core and supragenomes based on the complete genomic sequences of Rd and 12 clinical nontypeable strains.</title>
        <authorList>
            <person name="Hogg J.S."/>
            <person name="Hu F.Z."/>
            <person name="Janto B."/>
            <person name="Boissy R."/>
            <person name="Hayes J."/>
            <person name="Keefe R."/>
            <person name="Post J.C."/>
            <person name="Ehrlich G.D."/>
        </authorList>
    </citation>
    <scope>NUCLEOTIDE SEQUENCE [LARGE SCALE GENOMIC DNA]</scope>
    <source>
        <strain>PittGG</strain>
    </source>
</reference>
<sequence>MVKDTLFSTPIAKLGDFIFDENVAEVFPDMIQRSVPGYSNIITAIGMLAERFVTADSNVYDLGCSRGAATLSARRNIHQPNVKIIGIDNSQPMVERCRQHIAAYHSEIPVEILCNDIRHVEIKNASMVILNFTLQFLPPEDRVALLTKIYEGLNPNGVLVLSEKFRFEDTKIDHLLIDLHHQFKRANGYSELEVSQKRTALENVMRTDSIKTHKVRLKNVGFSQVELWFQCFNFGSMIAVK</sequence>
<keyword id="KW-0949">S-adenosyl-L-methionine</keyword>
<keyword id="KW-0808">Transferase</keyword>
<comment type="function">
    <text evidence="1">Catalyzes the conversion of S-adenosyl-L-methionine (SAM) to carboxy-S-adenosyl-L-methionine (Cx-SAM).</text>
</comment>
<comment type="catalytic activity">
    <reaction evidence="1">
        <text>prephenate + S-adenosyl-L-methionine = carboxy-S-adenosyl-L-methionine + 3-phenylpyruvate + H2O</text>
        <dbReference type="Rhea" id="RHEA:51692"/>
        <dbReference type="ChEBI" id="CHEBI:15377"/>
        <dbReference type="ChEBI" id="CHEBI:18005"/>
        <dbReference type="ChEBI" id="CHEBI:29934"/>
        <dbReference type="ChEBI" id="CHEBI:59789"/>
        <dbReference type="ChEBI" id="CHEBI:134278"/>
    </reaction>
</comment>
<comment type="subunit">
    <text evidence="1">Homodimer.</text>
</comment>
<comment type="similarity">
    <text evidence="1">Belongs to the class I-like SAM-binding methyltransferase superfamily. Cx-SAM synthase family.</text>
</comment>
<accession>A5UGD5</accession>
<gene>
    <name evidence="1" type="primary">cmoA</name>
    <name type="ordered locus">CGSHiGG_04410</name>
</gene>
<protein>
    <recommendedName>
        <fullName evidence="1">Carboxy-S-adenosyl-L-methionine synthase</fullName>
        <shortName evidence="1">Cx-SAM synthase</shortName>
        <ecNumber evidence="1">2.1.3.-</ecNumber>
    </recommendedName>
</protein>
<proteinExistence type="inferred from homology"/>